<accession>B9MRK2</accession>
<gene>
    <name evidence="1" type="primary">rplT</name>
    <name type="ordered locus">Athe_1206</name>
</gene>
<proteinExistence type="inferred from homology"/>
<name>RL20_CALBD</name>
<dbReference type="EMBL" id="CP001393">
    <property type="protein sequence ID" value="ACM60306.1"/>
    <property type="molecule type" value="Genomic_DNA"/>
</dbReference>
<dbReference type="RefSeq" id="WP_013430449.1">
    <property type="nucleotide sequence ID" value="NC_012034.1"/>
</dbReference>
<dbReference type="SMR" id="B9MRK2"/>
<dbReference type="STRING" id="521460.Athe_1206"/>
<dbReference type="GeneID" id="31772554"/>
<dbReference type="KEGG" id="ate:Athe_1206"/>
<dbReference type="eggNOG" id="COG0292">
    <property type="taxonomic scope" value="Bacteria"/>
</dbReference>
<dbReference type="HOGENOM" id="CLU_123265_0_1_9"/>
<dbReference type="Proteomes" id="UP000007723">
    <property type="component" value="Chromosome"/>
</dbReference>
<dbReference type="GO" id="GO:1990904">
    <property type="term" value="C:ribonucleoprotein complex"/>
    <property type="evidence" value="ECO:0007669"/>
    <property type="project" value="UniProtKB-KW"/>
</dbReference>
<dbReference type="GO" id="GO:0005840">
    <property type="term" value="C:ribosome"/>
    <property type="evidence" value="ECO:0007669"/>
    <property type="project" value="UniProtKB-KW"/>
</dbReference>
<dbReference type="GO" id="GO:0019843">
    <property type="term" value="F:rRNA binding"/>
    <property type="evidence" value="ECO:0007669"/>
    <property type="project" value="UniProtKB-UniRule"/>
</dbReference>
<dbReference type="GO" id="GO:0003735">
    <property type="term" value="F:structural constituent of ribosome"/>
    <property type="evidence" value="ECO:0007669"/>
    <property type="project" value="InterPro"/>
</dbReference>
<dbReference type="GO" id="GO:0000027">
    <property type="term" value="P:ribosomal large subunit assembly"/>
    <property type="evidence" value="ECO:0007669"/>
    <property type="project" value="UniProtKB-UniRule"/>
</dbReference>
<dbReference type="GO" id="GO:0006412">
    <property type="term" value="P:translation"/>
    <property type="evidence" value="ECO:0007669"/>
    <property type="project" value="InterPro"/>
</dbReference>
<dbReference type="CDD" id="cd07026">
    <property type="entry name" value="Ribosomal_L20"/>
    <property type="match status" value="1"/>
</dbReference>
<dbReference type="FunFam" id="1.10.1900.20:FF:000001">
    <property type="entry name" value="50S ribosomal protein L20"/>
    <property type="match status" value="1"/>
</dbReference>
<dbReference type="Gene3D" id="6.10.160.10">
    <property type="match status" value="1"/>
</dbReference>
<dbReference type="Gene3D" id="1.10.1900.20">
    <property type="entry name" value="Ribosomal protein L20"/>
    <property type="match status" value="1"/>
</dbReference>
<dbReference type="HAMAP" id="MF_00382">
    <property type="entry name" value="Ribosomal_bL20"/>
    <property type="match status" value="1"/>
</dbReference>
<dbReference type="InterPro" id="IPR005813">
    <property type="entry name" value="Ribosomal_bL20"/>
</dbReference>
<dbReference type="InterPro" id="IPR049946">
    <property type="entry name" value="RIBOSOMAL_L20_CS"/>
</dbReference>
<dbReference type="InterPro" id="IPR035566">
    <property type="entry name" value="Ribosomal_protein_bL20_C"/>
</dbReference>
<dbReference type="NCBIfam" id="TIGR01032">
    <property type="entry name" value="rplT_bact"/>
    <property type="match status" value="1"/>
</dbReference>
<dbReference type="PANTHER" id="PTHR10986">
    <property type="entry name" value="39S RIBOSOMAL PROTEIN L20"/>
    <property type="match status" value="1"/>
</dbReference>
<dbReference type="Pfam" id="PF00453">
    <property type="entry name" value="Ribosomal_L20"/>
    <property type="match status" value="1"/>
</dbReference>
<dbReference type="PRINTS" id="PR00062">
    <property type="entry name" value="RIBOSOMALL20"/>
</dbReference>
<dbReference type="SUPFAM" id="SSF74731">
    <property type="entry name" value="Ribosomal protein L20"/>
    <property type="match status" value="1"/>
</dbReference>
<dbReference type="PROSITE" id="PS00937">
    <property type="entry name" value="RIBOSOMAL_L20"/>
    <property type="match status" value="1"/>
</dbReference>
<feature type="chain" id="PRO_1000193931" description="Large ribosomal subunit protein bL20">
    <location>
        <begin position="1"/>
        <end position="119"/>
    </location>
</feature>
<comment type="function">
    <text evidence="1">Binds directly to 23S ribosomal RNA and is necessary for the in vitro assembly process of the 50S ribosomal subunit. It is not involved in the protein synthesizing functions of that subunit.</text>
</comment>
<comment type="similarity">
    <text evidence="1">Belongs to the bacterial ribosomal protein bL20 family.</text>
</comment>
<reference key="1">
    <citation type="submission" date="2009-01" db="EMBL/GenBank/DDBJ databases">
        <title>Complete sequence of chromosome of Caldicellulosiruptor becscii DSM 6725.</title>
        <authorList>
            <person name="Lucas S."/>
            <person name="Copeland A."/>
            <person name="Lapidus A."/>
            <person name="Glavina del Rio T."/>
            <person name="Tice H."/>
            <person name="Bruce D."/>
            <person name="Goodwin L."/>
            <person name="Pitluck S."/>
            <person name="Sims D."/>
            <person name="Meincke L."/>
            <person name="Brettin T."/>
            <person name="Detter J.C."/>
            <person name="Han C."/>
            <person name="Larimer F."/>
            <person name="Land M."/>
            <person name="Hauser L."/>
            <person name="Kyrpides N."/>
            <person name="Ovchinnikova G."/>
            <person name="Kataeva I."/>
            <person name="Adams M.W.W."/>
        </authorList>
    </citation>
    <scope>NUCLEOTIDE SEQUENCE [LARGE SCALE GENOMIC DNA]</scope>
    <source>
        <strain>ATCC BAA-1888 / DSM 6725 / KCTC 15123 / Z-1320</strain>
    </source>
</reference>
<keyword id="KW-0687">Ribonucleoprotein</keyword>
<keyword id="KW-0689">Ribosomal protein</keyword>
<keyword id="KW-0694">RNA-binding</keyword>
<keyword id="KW-0699">rRNA-binding</keyword>
<evidence type="ECO:0000255" key="1">
    <source>
        <dbReference type="HAMAP-Rule" id="MF_00382"/>
    </source>
</evidence>
<evidence type="ECO:0000305" key="2"/>
<sequence>MRIKNGVWARKRHKKWLKLAKGYFGAKSKIFKQAHVAVMRSLRYAYIGRRLKKRDFRRLWITRINAAARQNGLSYSKFMNGLKKAGINLNRKVLADMAVNDQKAFAELVEIAKKQINAQ</sequence>
<organism>
    <name type="scientific">Caldicellulosiruptor bescii (strain ATCC BAA-1888 / DSM 6725 / KCTC 15123 / Z-1320)</name>
    <name type="common">Anaerocellum thermophilum</name>
    <dbReference type="NCBI Taxonomy" id="521460"/>
    <lineage>
        <taxon>Bacteria</taxon>
        <taxon>Bacillati</taxon>
        <taxon>Bacillota</taxon>
        <taxon>Bacillota incertae sedis</taxon>
        <taxon>Caldicellulosiruptorales</taxon>
        <taxon>Caldicellulosiruptoraceae</taxon>
        <taxon>Caldicellulosiruptor</taxon>
    </lineage>
</organism>
<protein>
    <recommendedName>
        <fullName evidence="1">Large ribosomal subunit protein bL20</fullName>
    </recommendedName>
    <alternativeName>
        <fullName evidence="2">50S ribosomal protein L20</fullName>
    </alternativeName>
</protein>